<evidence type="ECO:0000255" key="1">
    <source>
        <dbReference type="HAMAP-Rule" id="MF_00067"/>
    </source>
</evidence>
<sequence>MYQDLIRNELNEAAETLANFLKDDANIHAIQRAAVLLADSFKAGGKVLSCGNGGSHCDAMHFAEELTGRYRENRPGYPAIAISDVSHISCVSNDFGYDYIFSRYVEAVGREGDVLLGISTSGNSGNVIKAIAAAREKGMKVITLTGKDGGKMAGTADIEIRVPHFGYADRIQEIHIKVIHILIQLIEKEMVK</sequence>
<reference key="1">
    <citation type="journal article" date="2011" name="J. Bacteriol.">
        <title>Comparative genomics of 28 Salmonella enterica isolates: evidence for CRISPR-mediated adaptive sublineage evolution.</title>
        <authorList>
            <person name="Fricke W.F."/>
            <person name="Mammel M.K."/>
            <person name="McDermott P.F."/>
            <person name="Tartera C."/>
            <person name="White D.G."/>
            <person name="Leclerc J.E."/>
            <person name="Ravel J."/>
            <person name="Cebula T.A."/>
        </authorList>
    </citation>
    <scope>NUCLEOTIDE SEQUENCE [LARGE SCALE GENOMIC DNA]</scope>
    <source>
        <strain>SL254</strain>
    </source>
</reference>
<dbReference type="EC" id="5.3.1.28" evidence="1"/>
<dbReference type="EMBL" id="CP001113">
    <property type="protein sequence ID" value="ACF64542.1"/>
    <property type="molecule type" value="Genomic_DNA"/>
</dbReference>
<dbReference type="SMR" id="B4SVV2"/>
<dbReference type="KEGG" id="see:SNSL254_A0349"/>
<dbReference type="HOGENOM" id="CLU_080999_4_0_6"/>
<dbReference type="UniPathway" id="UPA00041">
    <property type="reaction ID" value="UER00436"/>
</dbReference>
<dbReference type="Proteomes" id="UP000008824">
    <property type="component" value="Chromosome"/>
</dbReference>
<dbReference type="GO" id="GO:0005737">
    <property type="term" value="C:cytoplasm"/>
    <property type="evidence" value="ECO:0007669"/>
    <property type="project" value="UniProtKB-SubCell"/>
</dbReference>
<dbReference type="GO" id="GO:0097367">
    <property type="term" value="F:carbohydrate derivative binding"/>
    <property type="evidence" value="ECO:0007669"/>
    <property type="project" value="InterPro"/>
</dbReference>
<dbReference type="GO" id="GO:0008968">
    <property type="term" value="F:D-sedoheptulose 7-phosphate isomerase activity"/>
    <property type="evidence" value="ECO:0007669"/>
    <property type="project" value="UniProtKB-UniRule"/>
</dbReference>
<dbReference type="GO" id="GO:0008270">
    <property type="term" value="F:zinc ion binding"/>
    <property type="evidence" value="ECO:0007669"/>
    <property type="project" value="UniProtKB-UniRule"/>
</dbReference>
<dbReference type="GO" id="GO:0005975">
    <property type="term" value="P:carbohydrate metabolic process"/>
    <property type="evidence" value="ECO:0007669"/>
    <property type="project" value="UniProtKB-UniRule"/>
</dbReference>
<dbReference type="GO" id="GO:2001061">
    <property type="term" value="P:D-glycero-D-manno-heptose 7-phosphate biosynthetic process"/>
    <property type="evidence" value="ECO:0007669"/>
    <property type="project" value="UniProtKB-UniPathway"/>
</dbReference>
<dbReference type="CDD" id="cd05006">
    <property type="entry name" value="SIS_GmhA"/>
    <property type="match status" value="1"/>
</dbReference>
<dbReference type="FunFam" id="3.40.50.10490:FF:000013">
    <property type="entry name" value="Phosphoheptose isomerase"/>
    <property type="match status" value="1"/>
</dbReference>
<dbReference type="Gene3D" id="3.40.50.10490">
    <property type="entry name" value="Glucose-6-phosphate isomerase like protein, domain 1"/>
    <property type="match status" value="1"/>
</dbReference>
<dbReference type="HAMAP" id="MF_00067">
    <property type="entry name" value="GmhA"/>
    <property type="match status" value="1"/>
</dbReference>
<dbReference type="InterPro" id="IPR035461">
    <property type="entry name" value="GmhA/DiaA"/>
</dbReference>
<dbReference type="InterPro" id="IPR004515">
    <property type="entry name" value="Phosphoheptose_Isoase"/>
</dbReference>
<dbReference type="InterPro" id="IPR001347">
    <property type="entry name" value="SIS_dom"/>
</dbReference>
<dbReference type="InterPro" id="IPR046348">
    <property type="entry name" value="SIS_dom_sf"/>
</dbReference>
<dbReference type="InterPro" id="IPR050099">
    <property type="entry name" value="SIS_GmhA/DiaA_subfam"/>
</dbReference>
<dbReference type="NCBIfam" id="TIGR00441">
    <property type="entry name" value="gmhA"/>
    <property type="match status" value="1"/>
</dbReference>
<dbReference type="NCBIfam" id="NF001628">
    <property type="entry name" value="PRK00414.1"/>
    <property type="match status" value="1"/>
</dbReference>
<dbReference type="PANTHER" id="PTHR30390:SF7">
    <property type="entry name" value="PHOSPHOHEPTOSE ISOMERASE"/>
    <property type="match status" value="1"/>
</dbReference>
<dbReference type="PANTHER" id="PTHR30390">
    <property type="entry name" value="SEDOHEPTULOSE 7-PHOSPHATE ISOMERASE / DNAA INITIATOR-ASSOCIATING FACTOR FOR REPLICATION INITIATION"/>
    <property type="match status" value="1"/>
</dbReference>
<dbReference type="Pfam" id="PF13580">
    <property type="entry name" value="SIS_2"/>
    <property type="match status" value="1"/>
</dbReference>
<dbReference type="SUPFAM" id="SSF53697">
    <property type="entry name" value="SIS domain"/>
    <property type="match status" value="1"/>
</dbReference>
<dbReference type="PROSITE" id="PS51464">
    <property type="entry name" value="SIS"/>
    <property type="match status" value="1"/>
</dbReference>
<feature type="chain" id="PRO_1000092291" description="Phosphoheptose isomerase">
    <location>
        <begin position="1"/>
        <end position="192"/>
    </location>
</feature>
<feature type="domain" description="SIS" evidence="1">
    <location>
        <begin position="37"/>
        <end position="192"/>
    </location>
</feature>
<feature type="binding site" evidence="1">
    <location>
        <begin position="52"/>
        <end position="54"/>
    </location>
    <ligand>
        <name>substrate</name>
    </ligand>
</feature>
<feature type="binding site" evidence="1">
    <location>
        <position position="61"/>
    </location>
    <ligand>
        <name>Zn(2+)</name>
        <dbReference type="ChEBI" id="CHEBI:29105"/>
    </ligand>
</feature>
<feature type="binding site" evidence="1">
    <location>
        <position position="65"/>
    </location>
    <ligand>
        <name>substrate</name>
    </ligand>
</feature>
<feature type="binding site" evidence="1">
    <location>
        <position position="65"/>
    </location>
    <ligand>
        <name>Zn(2+)</name>
        <dbReference type="ChEBI" id="CHEBI:29105"/>
    </ligand>
</feature>
<feature type="binding site" evidence="1">
    <location>
        <begin position="93"/>
        <end position="94"/>
    </location>
    <ligand>
        <name>substrate</name>
    </ligand>
</feature>
<feature type="binding site" evidence="1">
    <location>
        <begin position="119"/>
        <end position="121"/>
    </location>
    <ligand>
        <name>substrate</name>
    </ligand>
</feature>
<feature type="binding site" evidence="1">
    <location>
        <position position="124"/>
    </location>
    <ligand>
        <name>substrate</name>
    </ligand>
</feature>
<feature type="binding site" evidence="1">
    <location>
        <position position="172"/>
    </location>
    <ligand>
        <name>substrate</name>
    </ligand>
</feature>
<feature type="binding site" evidence="1">
    <location>
        <position position="172"/>
    </location>
    <ligand>
        <name>Zn(2+)</name>
        <dbReference type="ChEBI" id="CHEBI:29105"/>
    </ligand>
</feature>
<feature type="binding site" evidence="1">
    <location>
        <position position="180"/>
    </location>
    <ligand>
        <name>Zn(2+)</name>
        <dbReference type="ChEBI" id="CHEBI:29105"/>
    </ligand>
</feature>
<gene>
    <name evidence="1" type="primary">gmhA</name>
    <name type="ordered locus">SNSL254_A0349</name>
</gene>
<keyword id="KW-0119">Carbohydrate metabolism</keyword>
<keyword id="KW-0963">Cytoplasm</keyword>
<keyword id="KW-0413">Isomerase</keyword>
<keyword id="KW-0479">Metal-binding</keyword>
<keyword id="KW-0862">Zinc</keyword>
<organism>
    <name type="scientific">Salmonella newport (strain SL254)</name>
    <dbReference type="NCBI Taxonomy" id="423368"/>
    <lineage>
        <taxon>Bacteria</taxon>
        <taxon>Pseudomonadati</taxon>
        <taxon>Pseudomonadota</taxon>
        <taxon>Gammaproteobacteria</taxon>
        <taxon>Enterobacterales</taxon>
        <taxon>Enterobacteriaceae</taxon>
        <taxon>Salmonella</taxon>
    </lineage>
</organism>
<comment type="function">
    <text evidence="1">Catalyzes the isomerization of sedoheptulose 7-phosphate in D-glycero-D-manno-heptose 7-phosphate.</text>
</comment>
<comment type="catalytic activity">
    <reaction evidence="1">
        <text>2 D-sedoheptulose 7-phosphate = D-glycero-alpha-D-manno-heptose 7-phosphate + D-glycero-beta-D-manno-heptose 7-phosphate</text>
        <dbReference type="Rhea" id="RHEA:27489"/>
        <dbReference type="ChEBI" id="CHEBI:57483"/>
        <dbReference type="ChEBI" id="CHEBI:60203"/>
        <dbReference type="ChEBI" id="CHEBI:60204"/>
        <dbReference type="EC" id="5.3.1.28"/>
    </reaction>
</comment>
<comment type="cofactor">
    <cofactor evidence="1">
        <name>Zn(2+)</name>
        <dbReference type="ChEBI" id="CHEBI:29105"/>
    </cofactor>
    <text evidence="1">Binds 1 zinc ion per subunit.</text>
</comment>
<comment type="pathway">
    <text evidence="1">Carbohydrate biosynthesis; D-glycero-D-manno-heptose 7-phosphate biosynthesis; D-glycero-alpha-D-manno-heptose 7-phosphate and D-glycero-beta-D-manno-heptose 7-phosphate from sedoheptulose 7-phosphate: step 1/1.</text>
</comment>
<comment type="subunit">
    <text evidence="1">Homotetramer.</text>
</comment>
<comment type="subcellular location">
    <subcellularLocation>
        <location evidence="1">Cytoplasm</location>
    </subcellularLocation>
</comment>
<comment type="miscellaneous">
    <text evidence="1">The reaction produces a racemic mixture of D-glycero-alpha-D-manno-heptose 7-phosphate and D-glycero-beta-D-manno-heptose 7-phosphate.</text>
</comment>
<comment type="similarity">
    <text evidence="1">Belongs to the SIS family. GmhA subfamily.</text>
</comment>
<proteinExistence type="inferred from homology"/>
<protein>
    <recommendedName>
        <fullName evidence="1">Phosphoheptose isomerase</fullName>
        <ecNumber evidence="1">5.3.1.28</ecNumber>
    </recommendedName>
    <alternativeName>
        <fullName evidence="1">Sedoheptulose 7-phosphate isomerase</fullName>
    </alternativeName>
</protein>
<accession>B4SVV2</accession>
<name>GMHA_SALNS</name>